<gene>
    <name evidence="1" type="primary">folD</name>
    <name type="ordered locus">SPs0705</name>
</gene>
<name>FOLD_STRPQ</name>
<accession>P0DF89</accession>
<accession>Q79XP5</accession>
<accession>Q8K6S8</accession>
<organism>
    <name type="scientific">Streptococcus pyogenes serotype M3 (strain SSI-1)</name>
    <dbReference type="NCBI Taxonomy" id="193567"/>
    <lineage>
        <taxon>Bacteria</taxon>
        <taxon>Bacillati</taxon>
        <taxon>Bacillota</taxon>
        <taxon>Bacilli</taxon>
        <taxon>Lactobacillales</taxon>
        <taxon>Streptococcaceae</taxon>
        <taxon>Streptococcus</taxon>
    </lineage>
</organism>
<keyword id="KW-0028">Amino-acid biosynthesis</keyword>
<keyword id="KW-0368">Histidine biosynthesis</keyword>
<keyword id="KW-0378">Hydrolase</keyword>
<keyword id="KW-0486">Methionine biosynthesis</keyword>
<keyword id="KW-0511">Multifunctional enzyme</keyword>
<keyword id="KW-0521">NADP</keyword>
<keyword id="KW-0554">One-carbon metabolism</keyword>
<keyword id="KW-0560">Oxidoreductase</keyword>
<keyword id="KW-0658">Purine biosynthesis</keyword>
<protein>
    <recommendedName>
        <fullName evidence="1">Bifunctional protein FolD</fullName>
    </recommendedName>
    <domain>
        <recommendedName>
            <fullName evidence="1">Methylenetetrahydrofolate dehydrogenase</fullName>
            <ecNumber evidence="1">1.5.1.5</ecNumber>
        </recommendedName>
    </domain>
    <domain>
        <recommendedName>
            <fullName evidence="1">Methenyltetrahydrofolate cyclohydrolase</fullName>
            <ecNumber evidence="1">3.5.4.9</ecNumber>
        </recommendedName>
    </domain>
</protein>
<proteinExistence type="inferred from homology"/>
<feature type="chain" id="PRO_0000411584" description="Bifunctional protein FolD">
    <location>
        <begin position="1"/>
        <end position="284"/>
    </location>
</feature>
<feature type="binding site" evidence="1">
    <location>
        <begin position="165"/>
        <end position="167"/>
    </location>
    <ligand>
        <name>NADP(+)</name>
        <dbReference type="ChEBI" id="CHEBI:58349"/>
    </ligand>
</feature>
<feature type="binding site" evidence="1">
    <location>
        <position position="190"/>
    </location>
    <ligand>
        <name>NADP(+)</name>
        <dbReference type="ChEBI" id="CHEBI:58349"/>
    </ligand>
</feature>
<evidence type="ECO:0000255" key="1">
    <source>
        <dbReference type="HAMAP-Rule" id="MF_01576"/>
    </source>
</evidence>
<reference key="1">
    <citation type="journal article" date="2003" name="Genome Res.">
        <title>Genome sequence of an M3 strain of Streptococcus pyogenes reveals a large-scale genomic rearrangement in invasive strains and new insights into phage evolution.</title>
        <authorList>
            <person name="Nakagawa I."/>
            <person name="Kurokawa K."/>
            <person name="Yamashita A."/>
            <person name="Nakata M."/>
            <person name="Tomiyasu Y."/>
            <person name="Okahashi N."/>
            <person name="Kawabata S."/>
            <person name="Yamazaki K."/>
            <person name="Shiba T."/>
            <person name="Yasunaga T."/>
            <person name="Hayashi H."/>
            <person name="Hattori M."/>
            <person name="Hamada S."/>
        </authorList>
    </citation>
    <scope>NUCLEOTIDE SEQUENCE [LARGE SCALE GENOMIC DNA]</scope>
    <source>
        <strain>SSI-1</strain>
    </source>
</reference>
<comment type="function">
    <text evidence="1">Catalyzes the oxidation of 5,10-methylenetetrahydrofolate to 5,10-methenyltetrahydrofolate and then the hydrolysis of 5,10-methenyltetrahydrofolate to 10-formyltetrahydrofolate.</text>
</comment>
<comment type="catalytic activity">
    <reaction evidence="1">
        <text>(6R)-5,10-methylene-5,6,7,8-tetrahydrofolate + NADP(+) = (6R)-5,10-methenyltetrahydrofolate + NADPH</text>
        <dbReference type="Rhea" id="RHEA:22812"/>
        <dbReference type="ChEBI" id="CHEBI:15636"/>
        <dbReference type="ChEBI" id="CHEBI:57455"/>
        <dbReference type="ChEBI" id="CHEBI:57783"/>
        <dbReference type="ChEBI" id="CHEBI:58349"/>
        <dbReference type="EC" id="1.5.1.5"/>
    </reaction>
</comment>
<comment type="catalytic activity">
    <reaction evidence="1">
        <text>(6R)-5,10-methenyltetrahydrofolate + H2O = (6R)-10-formyltetrahydrofolate + H(+)</text>
        <dbReference type="Rhea" id="RHEA:23700"/>
        <dbReference type="ChEBI" id="CHEBI:15377"/>
        <dbReference type="ChEBI" id="CHEBI:15378"/>
        <dbReference type="ChEBI" id="CHEBI:57455"/>
        <dbReference type="ChEBI" id="CHEBI:195366"/>
        <dbReference type="EC" id="3.5.4.9"/>
    </reaction>
</comment>
<comment type="pathway">
    <text evidence="1">One-carbon metabolism; tetrahydrofolate interconversion.</text>
</comment>
<comment type="subunit">
    <text evidence="1">Homodimer.</text>
</comment>
<comment type="similarity">
    <text evidence="1">Belongs to the tetrahydrofolate dehydrogenase/cyclohydrolase family.</text>
</comment>
<dbReference type="EC" id="1.5.1.5" evidence="1"/>
<dbReference type="EC" id="3.5.4.9" evidence="1"/>
<dbReference type="EMBL" id="BA000034">
    <property type="protein sequence ID" value="BAC63800.1"/>
    <property type="molecule type" value="Genomic_DNA"/>
</dbReference>
<dbReference type="RefSeq" id="WP_002989114.1">
    <property type="nucleotide sequence ID" value="NC_004606.1"/>
</dbReference>
<dbReference type="SMR" id="P0DF89"/>
<dbReference type="KEGG" id="sps:SPs0705"/>
<dbReference type="HOGENOM" id="CLU_034045_2_1_9"/>
<dbReference type="UniPathway" id="UPA00193"/>
<dbReference type="GO" id="GO:0005829">
    <property type="term" value="C:cytosol"/>
    <property type="evidence" value="ECO:0007669"/>
    <property type="project" value="TreeGrafter"/>
</dbReference>
<dbReference type="GO" id="GO:0004477">
    <property type="term" value="F:methenyltetrahydrofolate cyclohydrolase activity"/>
    <property type="evidence" value="ECO:0007669"/>
    <property type="project" value="UniProtKB-UniRule"/>
</dbReference>
<dbReference type="GO" id="GO:0004488">
    <property type="term" value="F:methylenetetrahydrofolate dehydrogenase (NADP+) activity"/>
    <property type="evidence" value="ECO:0007669"/>
    <property type="project" value="UniProtKB-UniRule"/>
</dbReference>
<dbReference type="GO" id="GO:0000105">
    <property type="term" value="P:L-histidine biosynthetic process"/>
    <property type="evidence" value="ECO:0007669"/>
    <property type="project" value="UniProtKB-KW"/>
</dbReference>
<dbReference type="GO" id="GO:0009086">
    <property type="term" value="P:methionine biosynthetic process"/>
    <property type="evidence" value="ECO:0007669"/>
    <property type="project" value="UniProtKB-KW"/>
</dbReference>
<dbReference type="GO" id="GO:0006164">
    <property type="term" value="P:purine nucleotide biosynthetic process"/>
    <property type="evidence" value="ECO:0007669"/>
    <property type="project" value="UniProtKB-KW"/>
</dbReference>
<dbReference type="GO" id="GO:0035999">
    <property type="term" value="P:tetrahydrofolate interconversion"/>
    <property type="evidence" value="ECO:0007669"/>
    <property type="project" value="UniProtKB-UniRule"/>
</dbReference>
<dbReference type="CDD" id="cd01080">
    <property type="entry name" value="NAD_bind_m-THF_DH_Cyclohyd"/>
    <property type="match status" value="1"/>
</dbReference>
<dbReference type="FunFam" id="3.40.50.10860:FF:000001">
    <property type="entry name" value="Bifunctional protein FolD"/>
    <property type="match status" value="1"/>
</dbReference>
<dbReference type="FunFam" id="3.40.50.720:FF:000094">
    <property type="entry name" value="Bifunctional protein FolD"/>
    <property type="match status" value="1"/>
</dbReference>
<dbReference type="Gene3D" id="3.40.50.10860">
    <property type="entry name" value="Leucine Dehydrogenase, chain A, domain 1"/>
    <property type="match status" value="1"/>
</dbReference>
<dbReference type="Gene3D" id="3.40.50.720">
    <property type="entry name" value="NAD(P)-binding Rossmann-like Domain"/>
    <property type="match status" value="1"/>
</dbReference>
<dbReference type="HAMAP" id="MF_01576">
    <property type="entry name" value="THF_DHG_CYH"/>
    <property type="match status" value="1"/>
</dbReference>
<dbReference type="InterPro" id="IPR046346">
    <property type="entry name" value="Aminoacid_DH-like_N_sf"/>
</dbReference>
<dbReference type="InterPro" id="IPR036291">
    <property type="entry name" value="NAD(P)-bd_dom_sf"/>
</dbReference>
<dbReference type="InterPro" id="IPR000672">
    <property type="entry name" value="THF_DH/CycHdrlase"/>
</dbReference>
<dbReference type="InterPro" id="IPR020630">
    <property type="entry name" value="THF_DH/CycHdrlase_cat_dom"/>
</dbReference>
<dbReference type="InterPro" id="IPR020867">
    <property type="entry name" value="THF_DH/CycHdrlase_CS"/>
</dbReference>
<dbReference type="InterPro" id="IPR020631">
    <property type="entry name" value="THF_DH/CycHdrlase_NAD-bd_dom"/>
</dbReference>
<dbReference type="NCBIfam" id="NF008058">
    <property type="entry name" value="PRK10792.1"/>
    <property type="match status" value="1"/>
</dbReference>
<dbReference type="NCBIfam" id="NF010776">
    <property type="entry name" value="PRK14179.1"/>
    <property type="match status" value="1"/>
</dbReference>
<dbReference type="NCBIfam" id="NF010783">
    <property type="entry name" value="PRK14186.1"/>
    <property type="match status" value="1"/>
</dbReference>
<dbReference type="NCBIfam" id="NF010785">
    <property type="entry name" value="PRK14188.1"/>
    <property type="match status" value="1"/>
</dbReference>
<dbReference type="PANTHER" id="PTHR48099:SF5">
    <property type="entry name" value="C-1-TETRAHYDROFOLATE SYNTHASE, CYTOPLASMIC"/>
    <property type="match status" value="1"/>
</dbReference>
<dbReference type="PANTHER" id="PTHR48099">
    <property type="entry name" value="C-1-TETRAHYDROFOLATE SYNTHASE, CYTOPLASMIC-RELATED"/>
    <property type="match status" value="1"/>
</dbReference>
<dbReference type="Pfam" id="PF00763">
    <property type="entry name" value="THF_DHG_CYH"/>
    <property type="match status" value="1"/>
</dbReference>
<dbReference type="Pfam" id="PF02882">
    <property type="entry name" value="THF_DHG_CYH_C"/>
    <property type="match status" value="1"/>
</dbReference>
<dbReference type="PRINTS" id="PR00085">
    <property type="entry name" value="THFDHDRGNASE"/>
</dbReference>
<dbReference type="SUPFAM" id="SSF53223">
    <property type="entry name" value="Aminoacid dehydrogenase-like, N-terminal domain"/>
    <property type="match status" value="1"/>
</dbReference>
<dbReference type="SUPFAM" id="SSF51735">
    <property type="entry name" value="NAD(P)-binding Rossmann-fold domains"/>
    <property type="match status" value="1"/>
</dbReference>
<dbReference type="PROSITE" id="PS00766">
    <property type="entry name" value="THF_DHG_CYH_1"/>
    <property type="match status" value="1"/>
</dbReference>
<dbReference type="PROSITE" id="PS00767">
    <property type="entry name" value="THF_DHG_CYH_2"/>
    <property type="match status" value="1"/>
</dbReference>
<sequence length="284" mass="31096">MTELIDGKALAQKMQQELAAKVNNLKQKKGIVPGLAVILVGDDPASQVYVRNKERAALTVGFKSETVRLSEFICQEELIAVIERYNADNTIHGILVQLPLPNHINDKKIILAIDPKKDVDGFHPMNTGHLWSGRPLMVPCTPSGIMELLREYNVNLEGKHAVIIGRSNIVGKPMAQLLLDKNATVTLTHSRTRQLEEVCRCADVLIVAIGQGHFITKQYIKEGAIVIDVGMNRDDNGKLIGDVAFDEVAEVAAKITPVPGGVGPMTIAMLLEQTYQSALRSTHK</sequence>